<dbReference type="EMBL" id="CH408033">
    <property type="protein sequence ID" value="EAQ86550.1"/>
    <property type="status" value="ALT_FRAME"/>
    <property type="molecule type" value="Genomic_DNA"/>
</dbReference>
<dbReference type="RefSeq" id="XP_001225459.1">
    <property type="nucleotide sequence ID" value="XM_001225458.1"/>
</dbReference>
<dbReference type="SMR" id="Q2GW51"/>
<dbReference type="FunCoup" id="Q2GW51">
    <property type="interactions" value="1125"/>
</dbReference>
<dbReference type="STRING" id="306901.Q2GW51"/>
<dbReference type="GeneID" id="4394449"/>
<dbReference type="VEuPathDB" id="FungiDB:CHGG_07803"/>
<dbReference type="eggNOG" id="KOG1628">
    <property type="taxonomic scope" value="Eukaryota"/>
</dbReference>
<dbReference type="HOGENOM" id="CLU_062507_0_0_1"/>
<dbReference type="InParanoid" id="Q2GW51"/>
<dbReference type="OrthoDB" id="9834376at2759"/>
<dbReference type="Proteomes" id="UP000001056">
    <property type="component" value="Unassembled WGS sequence"/>
</dbReference>
<dbReference type="GO" id="GO:0022627">
    <property type="term" value="C:cytosolic small ribosomal subunit"/>
    <property type="evidence" value="ECO:0007669"/>
    <property type="project" value="UniProtKB-UniRule"/>
</dbReference>
<dbReference type="GO" id="GO:0003735">
    <property type="term" value="F:structural constituent of ribosome"/>
    <property type="evidence" value="ECO:0007669"/>
    <property type="project" value="UniProtKB-UniRule"/>
</dbReference>
<dbReference type="GO" id="GO:0006412">
    <property type="term" value="P:translation"/>
    <property type="evidence" value="ECO:0007669"/>
    <property type="project" value="UniProtKB-UniRule"/>
</dbReference>
<dbReference type="HAMAP" id="MF_03122">
    <property type="entry name" value="Ribosomal_eS1_euk"/>
    <property type="match status" value="1"/>
</dbReference>
<dbReference type="InterPro" id="IPR001593">
    <property type="entry name" value="Ribosomal_eS1"/>
</dbReference>
<dbReference type="InterPro" id="IPR018281">
    <property type="entry name" value="Ribosomal_eS1_CS"/>
</dbReference>
<dbReference type="InterPro" id="IPR027500">
    <property type="entry name" value="Ribosomal_eS1_euk"/>
</dbReference>
<dbReference type="PANTHER" id="PTHR11830">
    <property type="entry name" value="40S RIBOSOMAL PROTEIN S3A"/>
    <property type="match status" value="1"/>
</dbReference>
<dbReference type="Pfam" id="PF01015">
    <property type="entry name" value="Ribosomal_S3Ae"/>
    <property type="match status" value="1"/>
</dbReference>
<dbReference type="SMART" id="SM01397">
    <property type="entry name" value="Ribosomal_S3Ae"/>
    <property type="match status" value="1"/>
</dbReference>
<dbReference type="PROSITE" id="PS01191">
    <property type="entry name" value="RIBOSOMAL_S3AE"/>
    <property type="match status" value="1"/>
</dbReference>
<sequence length="256" mass="29201">MAVGKNKRLSKGKKGLKKKAQDPFTRKDWYGIKAPAPFAIRDVGKTLVNRTTGLKNANDALKGRIVEVSLADLQKDEDHSFRKIKLRVDEVQGKNCLTNFHGLDFTSDKLRSLVRKWQTLIEANVTVMTTDHYLLRLFAIAFTKRRPNQIKKTTYAATSQIRAIRRKMTEIIQREASSCTLTQLTSKLIPEVIGREIEKATQGIYPLQNVHIRKVKLLKQPKFDLGALMTLHGESSTDEQGQKVEREFREQVLESV</sequence>
<reference key="1">
    <citation type="journal article" date="2015" name="Genome Announc.">
        <title>Draft genome sequence of the cellulolytic fungus Chaetomium globosum.</title>
        <authorList>
            <person name="Cuomo C.A."/>
            <person name="Untereiner W.A."/>
            <person name="Ma L.-J."/>
            <person name="Grabherr M."/>
            <person name="Birren B.W."/>
        </authorList>
    </citation>
    <scope>NUCLEOTIDE SEQUENCE [LARGE SCALE GENOMIC DNA]</scope>
    <source>
        <strain>ATCC 6205 / CBS 148.51 / DSM 1962 / NBRC 6347 / NRRL 1970</strain>
    </source>
</reference>
<keyword id="KW-0007">Acetylation</keyword>
<keyword id="KW-0963">Cytoplasm</keyword>
<keyword id="KW-1185">Reference proteome</keyword>
<keyword id="KW-0687">Ribonucleoprotein</keyword>
<keyword id="KW-0689">Ribosomal protein</keyword>
<name>RS3A_CHAGB</name>
<proteinExistence type="inferred from homology"/>
<accession>Q2GW51</accession>
<organism>
    <name type="scientific">Chaetomium globosum (strain ATCC 6205 / CBS 148.51 / DSM 1962 / NBRC 6347 / NRRL 1970)</name>
    <name type="common">Soil fungus</name>
    <dbReference type="NCBI Taxonomy" id="306901"/>
    <lineage>
        <taxon>Eukaryota</taxon>
        <taxon>Fungi</taxon>
        <taxon>Dikarya</taxon>
        <taxon>Ascomycota</taxon>
        <taxon>Pezizomycotina</taxon>
        <taxon>Sordariomycetes</taxon>
        <taxon>Sordariomycetidae</taxon>
        <taxon>Sordariales</taxon>
        <taxon>Chaetomiaceae</taxon>
        <taxon>Chaetomium</taxon>
    </lineage>
</organism>
<feature type="initiator methionine" description="Removed" evidence="1">
    <location>
        <position position="1"/>
    </location>
</feature>
<feature type="chain" id="PRO_0000389367" description="Small ribosomal subunit protein eS1">
    <location>
        <begin position="2"/>
        <end position="256"/>
    </location>
</feature>
<feature type="region of interest" description="Disordered" evidence="2">
    <location>
        <begin position="1"/>
        <end position="20"/>
    </location>
</feature>
<feature type="compositionally biased region" description="Basic residues" evidence="2">
    <location>
        <begin position="1"/>
        <end position="18"/>
    </location>
</feature>
<feature type="modified residue" description="N-acetylalanine; partial" evidence="1">
    <location>
        <position position="2"/>
    </location>
</feature>
<evidence type="ECO:0000255" key="1">
    <source>
        <dbReference type="HAMAP-Rule" id="MF_03122"/>
    </source>
</evidence>
<evidence type="ECO:0000256" key="2">
    <source>
        <dbReference type="SAM" id="MobiDB-lite"/>
    </source>
</evidence>
<evidence type="ECO:0000305" key="3"/>
<gene>
    <name evidence="1" type="primary">RPS1</name>
    <name type="ORF">CHGG_07803</name>
</gene>
<comment type="subunit">
    <text evidence="1">Component of the small ribosomal subunit. Mature ribosomes consist of a small (40S) and a large (60S) subunit. The 40S subunit contains about 33 different proteins and 1 molecule of RNA (18S). The 60S subunit contains about 49 different proteins and 3 molecules of RNA (25S, 5.8S and 5S).</text>
</comment>
<comment type="subcellular location">
    <subcellularLocation>
        <location evidence="1">Cytoplasm</location>
    </subcellularLocation>
</comment>
<comment type="similarity">
    <text evidence="1">Belongs to the eukaryotic ribosomal protein eS1 family.</text>
</comment>
<comment type="sequence caution" evidence="3">
    <conflict type="frameshift">
        <sequence resource="EMBL-CDS" id="EAQ86550"/>
    </conflict>
</comment>
<protein>
    <recommendedName>
        <fullName evidence="1">Small ribosomal subunit protein eS1</fullName>
    </recommendedName>
    <alternativeName>
        <fullName evidence="3">40S ribosomal protein S1</fullName>
    </alternativeName>
</protein>